<geneLocation type="chloroplast"/>
<organism>
    <name type="scientific">Chlorella vulgaris</name>
    <name type="common">Green alga</name>
    <dbReference type="NCBI Taxonomy" id="3077"/>
    <lineage>
        <taxon>Eukaryota</taxon>
        <taxon>Viridiplantae</taxon>
        <taxon>Chlorophyta</taxon>
        <taxon>core chlorophytes</taxon>
        <taxon>Trebouxiophyceae</taxon>
        <taxon>Chlorellales</taxon>
        <taxon>Chlorellaceae</taxon>
        <taxon>Chlorella clade</taxon>
        <taxon>Chlorella</taxon>
    </lineage>
</organism>
<accession>P56317</accession>
<reference key="1">
    <citation type="journal article" date="1997" name="Proc. Natl. Acad. Sci. U.S.A.">
        <title>Complete nucleotide sequence of the chloroplast genome from the green alga Chlorella vulgaris: the existence of genes possibly involved in chloroplast division.</title>
        <authorList>
            <person name="Wakasugi T."/>
            <person name="Nagai T."/>
            <person name="Kapoor M."/>
            <person name="Sugita M."/>
            <person name="Ito M."/>
            <person name="Ito S."/>
            <person name="Tsudzuki J."/>
            <person name="Nakashima K."/>
            <person name="Tsudzuki T."/>
            <person name="Suzuki Y."/>
            <person name="Hamada A."/>
            <person name="Ohta T."/>
            <person name="Inamura A."/>
            <person name="Yoshinaga K."/>
            <person name="Sugiura M."/>
        </authorList>
    </citation>
    <scope>NUCLEOTIDE SEQUENCE [LARGE SCALE GENOMIC DNA]</scope>
    <source>
        <strain>IAM C-27 / Tamiya</strain>
    </source>
</reference>
<comment type="function">
    <text evidence="1">Cleaves peptides in various proteins in a process that requires ATP hydrolysis. Has a chymotrypsin-like activity. Plays a major role in the degradation of misfolded proteins.</text>
</comment>
<comment type="catalytic activity">
    <reaction evidence="1">
        <text>Hydrolysis of proteins to small peptides in the presence of ATP and magnesium. alpha-casein is the usual test substrate. In the absence of ATP, only oligopeptides shorter than five residues are hydrolyzed (such as succinyl-Leu-Tyr-|-NHMec, and Leu-Tyr-Leu-|-Tyr-Trp, in which cleavage of the -Tyr-|-Leu- and -Tyr-|-Trp bonds also occurs).</text>
        <dbReference type="EC" id="3.4.21.92"/>
    </reaction>
</comment>
<comment type="subunit">
    <text>Component of the chloroplastic Clp protease core complex.</text>
</comment>
<comment type="subcellular location">
    <subcellularLocation>
        <location evidence="1">Plastid</location>
        <location evidence="1">Chloroplast stroma</location>
    </subcellularLocation>
</comment>
<comment type="similarity">
    <text evidence="1">Belongs to the peptidase S14 family.</text>
</comment>
<keyword id="KW-0150">Chloroplast</keyword>
<keyword id="KW-0378">Hydrolase</keyword>
<keyword id="KW-0934">Plastid</keyword>
<keyword id="KW-0645">Protease</keyword>
<keyword id="KW-0720">Serine protease</keyword>
<proteinExistence type="inferred from homology"/>
<sequence length="201" mass="22438">MPIGVPKVPFRLPGEPSAQWVDLYNRLYRERVLFLCQELDDELANQLIGIMLYLNAEEQNKGLYIYINSPGGSVTCGIAVYDAMNYIKSEVTTICVGTAASMASFILAGGDRGKRIALPHSRIMVHQPEGGSQGQASEVLSESQEVMRIRRQVGRIYSERTGQTLSRVSRDMDRDQFLSAREAKEYGLVDQVAVDTKWSTN</sequence>
<protein>
    <recommendedName>
        <fullName evidence="1">ATP-dependent Clp protease proteolytic subunit</fullName>
        <ecNumber evidence="1">3.4.21.92</ecNumber>
    </recommendedName>
    <alternativeName>
        <fullName evidence="1">Endopeptidase Clp</fullName>
    </alternativeName>
</protein>
<name>CLPP_CHLVU</name>
<feature type="chain" id="PRO_0000179738" description="ATP-dependent Clp protease proteolytic subunit">
    <location>
        <begin position="1"/>
        <end position="201"/>
    </location>
</feature>
<feature type="active site" description="Nucleophile" evidence="1">
    <location>
        <position position="101"/>
    </location>
</feature>
<feature type="active site" evidence="1">
    <location>
        <position position="126"/>
    </location>
</feature>
<dbReference type="EC" id="3.4.21.92" evidence="1"/>
<dbReference type="EMBL" id="AB001684">
    <property type="protein sequence ID" value="BAA57915.1"/>
    <property type="molecule type" value="Genomic_DNA"/>
</dbReference>
<dbReference type="PIR" id="T07267">
    <property type="entry name" value="T07267"/>
</dbReference>
<dbReference type="RefSeq" id="NP_045839.1">
    <property type="nucleotide sequence ID" value="NC_001865.1"/>
</dbReference>
<dbReference type="SMR" id="P56317"/>
<dbReference type="MEROPS" id="S14.002"/>
<dbReference type="GeneID" id="809125"/>
<dbReference type="BRENDA" id="3.4.21.92">
    <property type="organism ID" value="1337"/>
</dbReference>
<dbReference type="GO" id="GO:0009570">
    <property type="term" value="C:chloroplast stroma"/>
    <property type="evidence" value="ECO:0007669"/>
    <property type="project" value="UniProtKB-SubCell"/>
</dbReference>
<dbReference type="GO" id="GO:0009368">
    <property type="term" value="C:endopeptidase Clp complex"/>
    <property type="evidence" value="ECO:0007669"/>
    <property type="project" value="TreeGrafter"/>
</dbReference>
<dbReference type="GO" id="GO:0004176">
    <property type="term" value="F:ATP-dependent peptidase activity"/>
    <property type="evidence" value="ECO:0007669"/>
    <property type="project" value="InterPro"/>
</dbReference>
<dbReference type="GO" id="GO:0051117">
    <property type="term" value="F:ATPase binding"/>
    <property type="evidence" value="ECO:0007669"/>
    <property type="project" value="TreeGrafter"/>
</dbReference>
<dbReference type="GO" id="GO:0004252">
    <property type="term" value="F:serine-type endopeptidase activity"/>
    <property type="evidence" value="ECO:0007669"/>
    <property type="project" value="UniProtKB-UniRule"/>
</dbReference>
<dbReference type="GO" id="GO:0006515">
    <property type="term" value="P:protein quality control for misfolded or incompletely synthesized proteins"/>
    <property type="evidence" value="ECO:0007669"/>
    <property type="project" value="TreeGrafter"/>
</dbReference>
<dbReference type="CDD" id="cd07017">
    <property type="entry name" value="S14_ClpP_2"/>
    <property type="match status" value="1"/>
</dbReference>
<dbReference type="Gene3D" id="3.90.226.10">
    <property type="entry name" value="2-enoyl-CoA Hydratase, Chain A, domain 1"/>
    <property type="match status" value="1"/>
</dbReference>
<dbReference type="HAMAP" id="MF_00444">
    <property type="entry name" value="ClpP"/>
    <property type="match status" value="1"/>
</dbReference>
<dbReference type="InterPro" id="IPR001907">
    <property type="entry name" value="ClpP"/>
</dbReference>
<dbReference type="InterPro" id="IPR029045">
    <property type="entry name" value="ClpP/crotonase-like_dom_sf"/>
</dbReference>
<dbReference type="InterPro" id="IPR023562">
    <property type="entry name" value="ClpP/TepA"/>
</dbReference>
<dbReference type="InterPro" id="IPR033135">
    <property type="entry name" value="ClpP_His_AS"/>
</dbReference>
<dbReference type="InterPro" id="IPR018215">
    <property type="entry name" value="ClpP_Ser_AS"/>
</dbReference>
<dbReference type="NCBIfam" id="NF001368">
    <property type="entry name" value="PRK00277.1"/>
    <property type="match status" value="1"/>
</dbReference>
<dbReference type="PANTHER" id="PTHR10381">
    <property type="entry name" value="ATP-DEPENDENT CLP PROTEASE PROTEOLYTIC SUBUNIT"/>
    <property type="match status" value="1"/>
</dbReference>
<dbReference type="PANTHER" id="PTHR10381:SF15">
    <property type="entry name" value="CHLOROPLASTIC ATP-DEPENDENT CLP PROTEASE PROTEOLYTIC SUBUNIT 1"/>
    <property type="match status" value="1"/>
</dbReference>
<dbReference type="Pfam" id="PF00574">
    <property type="entry name" value="CLP_protease"/>
    <property type="match status" value="1"/>
</dbReference>
<dbReference type="PRINTS" id="PR00127">
    <property type="entry name" value="CLPPROTEASEP"/>
</dbReference>
<dbReference type="SUPFAM" id="SSF52096">
    <property type="entry name" value="ClpP/crotonase"/>
    <property type="match status" value="1"/>
</dbReference>
<dbReference type="PROSITE" id="PS00382">
    <property type="entry name" value="CLP_PROTEASE_HIS"/>
    <property type="match status" value="1"/>
</dbReference>
<dbReference type="PROSITE" id="PS00381">
    <property type="entry name" value="CLP_PROTEASE_SER"/>
    <property type="match status" value="1"/>
</dbReference>
<evidence type="ECO:0000255" key="1">
    <source>
        <dbReference type="HAMAP-Rule" id="MF_00444"/>
    </source>
</evidence>
<gene>
    <name evidence="1" type="primary">clpP</name>
</gene>